<name>FTSL_MELPT</name>
<protein>
    <recommendedName>
        <fullName evidence="1">Cell division protein FtsL</fullName>
    </recommendedName>
</protein>
<dbReference type="EMBL" id="AP012200">
    <property type="protein sequence ID" value="BAK21233.1"/>
    <property type="molecule type" value="Genomic_DNA"/>
</dbReference>
<dbReference type="RefSeq" id="WP_013773671.1">
    <property type="nucleotide sequence ID" value="NC_015516.1"/>
</dbReference>
<dbReference type="SMR" id="F3Y9Q5"/>
<dbReference type="STRING" id="940190.MPTP_0767"/>
<dbReference type="GeneID" id="57043705"/>
<dbReference type="KEGG" id="mps:MPTP_0767"/>
<dbReference type="HOGENOM" id="CLU_155775_0_0_9"/>
<dbReference type="OrthoDB" id="2199933at2"/>
<dbReference type="Proteomes" id="UP000008456">
    <property type="component" value="Chromosome"/>
</dbReference>
<dbReference type="GO" id="GO:0032153">
    <property type="term" value="C:cell division site"/>
    <property type="evidence" value="ECO:0007669"/>
    <property type="project" value="UniProtKB-UniRule"/>
</dbReference>
<dbReference type="GO" id="GO:0005886">
    <property type="term" value="C:plasma membrane"/>
    <property type="evidence" value="ECO:0007669"/>
    <property type="project" value="UniProtKB-SubCell"/>
</dbReference>
<dbReference type="GO" id="GO:0043093">
    <property type="term" value="P:FtsZ-dependent cytokinesis"/>
    <property type="evidence" value="ECO:0007669"/>
    <property type="project" value="UniProtKB-UniRule"/>
</dbReference>
<dbReference type="HAMAP" id="MF_00910">
    <property type="entry name" value="FtsL"/>
    <property type="match status" value="1"/>
</dbReference>
<dbReference type="InterPro" id="IPR011922">
    <property type="entry name" value="Cell_div_FtsL"/>
</dbReference>
<dbReference type="NCBIfam" id="TIGR02209">
    <property type="entry name" value="ftsL_broad"/>
    <property type="match status" value="1"/>
</dbReference>
<dbReference type="Pfam" id="PF04999">
    <property type="entry name" value="FtsL"/>
    <property type="match status" value="1"/>
</dbReference>
<evidence type="ECO:0000255" key="1">
    <source>
        <dbReference type="HAMAP-Rule" id="MF_00910"/>
    </source>
</evidence>
<keyword id="KW-0131">Cell cycle</keyword>
<keyword id="KW-0132">Cell division</keyword>
<keyword id="KW-1003">Cell membrane</keyword>
<keyword id="KW-0472">Membrane</keyword>
<keyword id="KW-1185">Reference proteome</keyword>
<keyword id="KW-0812">Transmembrane</keyword>
<keyword id="KW-1133">Transmembrane helix</keyword>
<organism>
    <name type="scientific">Melissococcus plutonius (strain ATCC 35311 / DSM 29964 / CIP 104052 / LMG 20360 / NCIMB 702443)</name>
    <dbReference type="NCBI Taxonomy" id="940190"/>
    <lineage>
        <taxon>Bacteria</taxon>
        <taxon>Bacillati</taxon>
        <taxon>Bacillota</taxon>
        <taxon>Bacilli</taxon>
        <taxon>Lactobacillales</taxon>
        <taxon>Enterococcaceae</taxon>
        <taxon>Melissococcus</taxon>
    </lineage>
</organism>
<proteinExistence type="inferred from homology"/>
<gene>
    <name evidence="1" type="primary">ftsL</name>
    <name type="ordered locus">MPTP_0767</name>
</gene>
<sequence length="132" mass="15189">MAELKKMRHNHYDVPVMDEPVIASQIKKTNQKKESFQLPQKKLNKISVFEKILCILLLCSIVGIVVITIQIRTTISETMNNITEAQVKNERKKEEMLKLEQEKSELSKADRIKSIGKKQGLSEIDGNLRKVK</sequence>
<feature type="chain" id="PRO_0000414560" description="Cell division protein FtsL">
    <location>
        <begin position="1"/>
        <end position="132"/>
    </location>
</feature>
<feature type="topological domain" description="Cytoplasmic" evidence="1">
    <location>
        <begin position="1"/>
        <end position="50"/>
    </location>
</feature>
<feature type="transmembrane region" description="Helical" evidence="1">
    <location>
        <begin position="51"/>
        <end position="71"/>
    </location>
</feature>
<feature type="topological domain" description="Extracellular" evidence="1">
    <location>
        <begin position="72"/>
        <end position="132"/>
    </location>
</feature>
<accession>F3Y9Q5</accession>
<comment type="function">
    <text evidence="1">Essential cell division protein.</text>
</comment>
<comment type="subcellular location">
    <subcellularLocation>
        <location evidence="1">Cell membrane</location>
        <topology evidence="1">Single-pass type II membrane protein</topology>
    </subcellularLocation>
    <text evidence="1">Localizes to the division septum where it forms a ring structure.</text>
</comment>
<comment type="similarity">
    <text evidence="1">Belongs to the FtsL family.</text>
</comment>
<reference key="1">
    <citation type="journal article" date="2011" name="J. Bacteriol.">
        <title>Complete genome sequence of Melissococcus plutonius ATCC 35311.</title>
        <authorList>
            <person name="Okumura K."/>
            <person name="Arai R."/>
            <person name="Okura M."/>
            <person name="Kirikae T."/>
            <person name="Takamatsu D."/>
            <person name="Osaki M."/>
            <person name="Miyoshi-Akiyama T."/>
        </authorList>
    </citation>
    <scope>NUCLEOTIDE SEQUENCE [LARGE SCALE GENOMIC DNA]</scope>
    <source>
        <strain>ATCC 35311 / DSM 29964 / CIP 104052 / LMG 20360 / NCIMB 702443</strain>
    </source>
</reference>